<name>FMT_METCA</name>
<organism>
    <name type="scientific">Methylococcus capsulatus (strain ATCC 33009 / NCIMB 11132 / Bath)</name>
    <dbReference type="NCBI Taxonomy" id="243233"/>
    <lineage>
        <taxon>Bacteria</taxon>
        <taxon>Pseudomonadati</taxon>
        <taxon>Pseudomonadota</taxon>
        <taxon>Gammaproteobacteria</taxon>
        <taxon>Methylococcales</taxon>
        <taxon>Methylococcaceae</taxon>
        <taxon>Methylococcus</taxon>
    </lineage>
</organism>
<evidence type="ECO:0000255" key="1">
    <source>
        <dbReference type="HAMAP-Rule" id="MF_00182"/>
    </source>
</evidence>
<accession>Q603G2</accession>
<proteinExistence type="inferred from homology"/>
<reference key="1">
    <citation type="journal article" date="2004" name="PLoS Biol.">
        <title>Genomic insights into methanotrophy: the complete genome sequence of Methylococcus capsulatus (Bath).</title>
        <authorList>
            <person name="Ward N.L."/>
            <person name="Larsen O."/>
            <person name="Sakwa J."/>
            <person name="Bruseth L."/>
            <person name="Khouri H.M."/>
            <person name="Durkin A.S."/>
            <person name="Dimitrov G."/>
            <person name="Jiang L."/>
            <person name="Scanlan D."/>
            <person name="Kang K.H."/>
            <person name="Lewis M.R."/>
            <person name="Nelson K.E."/>
            <person name="Methe B.A."/>
            <person name="Wu M."/>
            <person name="Heidelberg J.F."/>
            <person name="Paulsen I.T."/>
            <person name="Fouts D.E."/>
            <person name="Ravel J."/>
            <person name="Tettelin H."/>
            <person name="Ren Q."/>
            <person name="Read T.D."/>
            <person name="DeBoy R.T."/>
            <person name="Seshadri R."/>
            <person name="Salzberg S.L."/>
            <person name="Jensen H.B."/>
            <person name="Birkeland N.K."/>
            <person name="Nelson W.C."/>
            <person name="Dodson R.J."/>
            <person name="Grindhaug S.H."/>
            <person name="Holt I.E."/>
            <person name="Eidhammer I."/>
            <person name="Jonasen I."/>
            <person name="Vanaken S."/>
            <person name="Utterback T.R."/>
            <person name="Feldblyum T.V."/>
            <person name="Fraser C.M."/>
            <person name="Lillehaug J.R."/>
            <person name="Eisen J.A."/>
        </authorList>
    </citation>
    <scope>NUCLEOTIDE SEQUENCE [LARGE SCALE GENOMIC DNA]</scope>
    <source>
        <strain>ATCC 33009 / NCIMB 11132 / Bath</strain>
    </source>
</reference>
<dbReference type="EC" id="2.1.2.9" evidence="1"/>
<dbReference type="EMBL" id="AE017282">
    <property type="protein sequence ID" value="AAU91131.1"/>
    <property type="molecule type" value="Genomic_DNA"/>
</dbReference>
<dbReference type="RefSeq" id="WP_010962043.1">
    <property type="nucleotide sequence ID" value="NC_002977.6"/>
</dbReference>
<dbReference type="SMR" id="Q603G2"/>
<dbReference type="STRING" id="243233.MCA2844"/>
<dbReference type="GeneID" id="88225019"/>
<dbReference type="KEGG" id="mca:MCA2844"/>
<dbReference type="eggNOG" id="COG0223">
    <property type="taxonomic scope" value="Bacteria"/>
</dbReference>
<dbReference type="HOGENOM" id="CLU_033347_1_2_6"/>
<dbReference type="Proteomes" id="UP000006821">
    <property type="component" value="Chromosome"/>
</dbReference>
<dbReference type="GO" id="GO:0005829">
    <property type="term" value="C:cytosol"/>
    <property type="evidence" value="ECO:0007669"/>
    <property type="project" value="TreeGrafter"/>
</dbReference>
<dbReference type="GO" id="GO:0004479">
    <property type="term" value="F:methionyl-tRNA formyltransferase activity"/>
    <property type="evidence" value="ECO:0007669"/>
    <property type="project" value="UniProtKB-UniRule"/>
</dbReference>
<dbReference type="CDD" id="cd08646">
    <property type="entry name" value="FMT_core_Met-tRNA-FMT_N"/>
    <property type="match status" value="1"/>
</dbReference>
<dbReference type="CDD" id="cd08704">
    <property type="entry name" value="Met_tRNA_FMT_C"/>
    <property type="match status" value="1"/>
</dbReference>
<dbReference type="Gene3D" id="3.10.25.10">
    <property type="entry name" value="Formyl transferase, C-terminal domain"/>
    <property type="match status" value="1"/>
</dbReference>
<dbReference type="Gene3D" id="3.40.50.170">
    <property type="entry name" value="Formyl transferase, N-terminal domain"/>
    <property type="match status" value="1"/>
</dbReference>
<dbReference type="HAMAP" id="MF_00182">
    <property type="entry name" value="Formyl_trans"/>
    <property type="match status" value="1"/>
</dbReference>
<dbReference type="InterPro" id="IPR005794">
    <property type="entry name" value="Fmt"/>
</dbReference>
<dbReference type="InterPro" id="IPR005793">
    <property type="entry name" value="Formyl_trans_C"/>
</dbReference>
<dbReference type="InterPro" id="IPR037022">
    <property type="entry name" value="Formyl_trans_C_sf"/>
</dbReference>
<dbReference type="InterPro" id="IPR002376">
    <property type="entry name" value="Formyl_transf_N"/>
</dbReference>
<dbReference type="InterPro" id="IPR036477">
    <property type="entry name" value="Formyl_transf_N_sf"/>
</dbReference>
<dbReference type="InterPro" id="IPR011034">
    <property type="entry name" value="Formyl_transferase-like_C_sf"/>
</dbReference>
<dbReference type="InterPro" id="IPR044135">
    <property type="entry name" value="Met-tRNA-FMT_C"/>
</dbReference>
<dbReference type="InterPro" id="IPR041711">
    <property type="entry name" value="Met-tRNA-FMT_N"/>
</dbReference>
<dbReference type="NCBIfam" id="TIGR00460">
    <property type="entry name" value="fmt"/>
    <property type="match status" value="1"/>
</dbReference>
<dbReference type="PANTHER" id="PTHR11138">
    <property type="entry name" value="METHIONYL-TRNA FORMYLTRANSFERASE"/>
    <property type="match status" value="1"/>
</dbReference>
<dbReference type="PANTHER" id="PTHR11138:SF5">
    <property type="entry name" value="METHIONYL-TRNA FORMYLTRANSFERASE, MITOCHONDRIAL"/>
    <property type="match status" value="1"/>
</dbReference>
<dbReference type="Pfam" id="PF02911">
    <property type="entry name" value="Formyl_trans_C"/>
    <property type="match status" value="1"/>
</dbReference>
<dbReference type="Pfam" id="PF00551">
    <property type="entry name" value="Formyl_trans_N"/>
    <property type="match status" value="1"/>
</dbReference>
<dbReference type="SUPFAM" id="SSF50486">
    <property type="entry name" value="FMT C-terminal domain-like"/>
    <property type="match status" value="1"/>
</dbReference>
<dbReference type="SUPFAM" id="SSF53328">
    <property type="entry name" value="Formyltransferase"/>
    <property type="match status" value="1"/>
</dbReference>
<keyword id="KW-0648">Protein biosynthesis</keyword>
<keyword id="KW-1185">Reference proteome</keyword>
<keyword id="KW-0808">Transferase</keyword>
<protein>
    <recommendedName>
        <fullName evidence="1">Methionyl-tRNA formyltransferase</fullName>
        <ecNumber evidence="1">2.1.2.9</ecNumber>
    </recommendedName>
</protein>
<gene>
    <name evidence="1" type="primary">fmt</name>
    <name type="ordered locus">MCA2844</name>
</gene>
<feature type="chain" id="PRO_0000082992" description="Methionyl-tRNA formyltransferase">
    <location>
        <begin position="1"/>
        <end position="308"/>
    </location>
</feature>
<feature type="binding site" evidence="1">
    <location>
        <begin position="109"/>
        <end position="112"/>
    </location>
    <ligand>
        <name>(6S)-5,6,7,8-tetrahydrofolate</name>
        <dbReference type="ChEBI" id="CHEBI:57453"/>
    </ligand>
</feature>
<sequence>MRIVFAGTPEFAVPTLRALIASGHPPCAVYTQPDRPAGRGRKIAPSPVKQLAIEHGLPVFQPASLKGPEERERLVALEPDLMVVVAYGLILPTPVLTVPRFGCVNIHASLLPRWRGAAPIQRAILAGDRETGVTLMRIEPRLDAGPMLGKRSCSIGDDDTTASLHDRLAGLGAEMLIELLPGLAADRLTGEIQDESQVTYAEKIEKSEARLDWQKDATSLSRRVRAFNPWPVAETTLEGTVLRIWSAQVLDPAPDAPPGSIIACTKNLDVACGRGALRILEVQPPGKRRMSAKDFLNAHALAGKRLGT</sequence>
<comment type="function">
    <text evidence="1">Attaches a formyl group to the free amino group of methionyl-tRNA(fMet). The formyl group appears to play a dual role in the initiator identity of N-formylmethionyl-tRNA by promoting its recognition by IF2 and preventing the misappropriation of this tRNA by the elongation apparatus.</text>
</comment>
<comment type="catalytic activity">
    <reaction evidence="1">
        <text>L-methionyl-tRNA(fMet) + (6R)-10-formyltetrahydrofolate = N-formyl-L-methionyl-tRNA(fMet) + (6S)-5,6,7,8-tetrahydrofolate + H(+)</text>
        <dbReference type="Rhea" id="RHEA:24380"/>
        <dbReference type="Rhea" id="RHEA-COMP:9952"/>
        <dbReference type="Rhea" id="RHEA-COMP:9953"/>
        <dbReference type="ChEBI" id="CHEBI:15378"/>
        <dbReference type="ChEBI" id="CHEBI:57453"/>
        <dbReference type="ChEBI" id="CHEBI:78530"/>
        <dbReference type="ChEBI" id="CHEBI:78844"/>
        <dbReference type="ChEBI" id="CHEBI:195366"/>
        <dbReference type="EC" id="2.1.2.9"/>
    </reaction>
</comment>
<comment type="similarity">
    <text evidence="1">Belongs to the Fmt family.</text>
</comment>